<comment type="function">
    <text evidence="1">Catalyzes the acyloin condensation reaction between C atoms 2 and 3 of pyruvate and glyceraldehyde 3-phosphate to yield 1-deoxy-D-xylulose-5-phosphate (DXP).</text>
</comment>
<comment type="catalytic activity">
    <reaction evidence="1">
        <text>D-glyceraldehyde 3-phosphate + pyruvate + H(+) = 1-deoxy-D-xylulose 5-phosphate + CO2</text>
        <dbReference type="Rhea" id="RHEA:12605"/>
        <dbReference type="ChEBI" id="CHEBI:15361"/>
        <dbReference type="ChEBI" id="CHEBI:15378"/>
        <dbReference type="ChEBI" id="CHEBI:16526"/>
        <dbReference type="ChEBI" id="CHEBI:57792"/>
        <dbReference type="ChEBI" id="CHEBI:59776"/>
        <dbReference type="EC" id="2.2.1.7"/>
    </reaction>
</comment>
<comment type="cofactor">
    <cofactor evidence="1">
        <name>Mg(2+)</name>
        <dbReference type="ChEBI" id="CHEBI:18420"/>
    </cofactor>
    <text evidence="1">Binds 1 Mg(2+) ion per subunit.</text>
</comment>
<comment type="cofactor">
    <cofactor evidence="1">
        <name>thiamine diphosphate</name>
        <dbReference type="ChEBI" id="CHEBI:58937"/>
    </cofactor>
    <text evidence="1">Binds 1 thiamine pyrophosphate per subunit.</text>
</comment>
<comment type="pathway">
    <text evidence="1">Metabolic intermediate biosynthesis; 1-deoxy-D-xylulose 5-phosphate biosynthesis; 1-deoxy-D-xylulose 5-phosphate from D-glyceraldehyde 3-phosphate and pyruvate: step 1/1.</text>
</comment>
<comment type="subunit">
    <text evidence="1">Homodimer.</text>
</comment>
<comment type="similarity">
    <text evidence="1">Belongs to the transketolase family. DXPS subfamily.</text>
</comment>
<organism>
    <name type="scientific">Chlamydia trachomatis serovar D (strain ATCC VR-885 / DSM 19411 / UW-3/Cx)</name>
    <dbReference type="NCBI Taxonomy" id="272561"/>
    <lineage>
        <taxon>Bacteria</taxon>
        <taxon>Pseudomonadati</taxon>
        <taxon>Chlamydiota</taxon>
        <taxon>Chlamydiia</taxon>
        <taxon>Chlamydiales</taxon>
        <taxon>Chlamydiaceae</taxon>
        <taxon>Chlamydia/Chlamydophila group</taxon>
        <taxon>Chlamydia</taxon>
    </lineage>
</organism>
<name>DXS_CHLTR</name>
<reference key="1">
    <citation type="journal article" date="1998" name="Science">
        <title>Genome sequence of an obligate intracellular pathogen of humans: Chlamydia trachomatis.</title>
        <authorList>
            <person name="Stephens R.S."/>
            <person name="Kalman S."/>
            <person name="Lammel C.J."/>
            <person name="Fan J."/>
            <person name="Marathe R."/>
            <person name="Aravind L."/>
            <person name="Mitchell W.P."/>
            <person name="Olinger L."/>
            <person name="Tatusov R.L."/>
            <person name="Zhao Q."/>
            <person name="Koonin E.V."/>
            <person name="Davis R.W."/>
        </authorList>
    </citation>
    <scope>NUCLEOTIDE SEQUENCE [LARGE SCALE GENOMIC DNA]</scope>
    <source>
        <strain>ATCC VR-885 / DSM 19411 / UW-3/Cx</strain>
    </source>
</reference>
<evidence type="ECO:0000255" key="1">
    <source>
        <dbReference type="HAMAP-Rule" id="MF_00315"/>
    </source>
</evidence>
<protein>
    <recommendedName>
        <fullName evidence="1">1-deoxy-D-xylulose-5-phosphate synthase</fullName>
        <ecNumber evidence="1">2.2.1.7</ecNumber>
    </recommendedName>
    <alternativeName>
        <fullName evidence="1">1-deoxyxylulose-5-phosphate synthase</fullName>
        <shortName evidence="1">DXP synthase</shortName>
        <shortName evidence="1">DXPS</shortName>
    </alternativeName>
</protein>
<proteinExistence type="inferred from homology"/>
<keyword id="KW-0414">Isoprene biosynthesis</keyword>
<keyword id="KW-0460">Magnesium</keyword>
<keyword id="KW-0479">Metal-binding</keyword>
<keyword id="KW-1185">Reference proteome</keyword>
<keyword id="KW-0784">Thiamine biosynthesis</keyword>
<keyword id="KW-0786">Thiamine pyrophosphate</keyword>
<keyword id="KW-0808">Transferase</keyword>
<dbReference type="EC" id="2.2.1.7" evidence="1"/>
<dbReference type="EMBL" id="AE001273">
    <property type="protein sequence ID" value="AAC67926.1"/>
    <property type="molecule type" value="Genomic_DNA"/>
</dbReference>
<dbReference type="PIR" id="F71527">
    <property type="entry name" value="F71527"/>
</dbReference>
<dbReference type="RefSeq" id="NP_219838.1">
    <property type="nucleotide sequence ID" value="NC_000117.1"/>
</dbReference>
<dbReference type="RefSeq" id="WP_009871681.1">
    <property type="nucleotide sequence ID" value="NC_000117.1"/>
</dbReference>
<dbReference type="SMR" id="O84335"/>
<dbReference type="FunCoup" id="O84335">
    <property type="interactions" value="228"/>
</dbReference>
<dbReference type="STRING" id="272561.CT_331"/>
<dbReference type="EnsemblBacteria" id="AAC67926">
    <property type="protein sequence ID" value="AAC67926"/>
    <property type="gene ID" value="CT_331"/>
</dbReference>
<dbReference type="GeneID" id="884788"/>
<dbReference type="KEGG" id="ctr:CT_331"/>
<dbReference type="PATRIC" id="fig|272561.5.peg.357"/>
<dbReference type="HOGENOM" id="CLU_009227_1_4_0"/>
<dbReference type="InParanoid" id="O84335"/>
<dbReference type="OrthoDB" id="9803371at2"/>
<dbReference type="UniPathway" id="UPA00064">
    <property type="reaction ID" value="UER00091"/>
</dbReference>
<dbReference type="Proteomes" id="UP000000431">
    <property type="component" value="Chromosome"/>
</dbReference>
<dbReference type="GO" id="GO:0005829">
    <property type="term" value="C:cytosol"/>
    <property type="evidence" value="ECO:0000318"/>
    <property type="project" value="GO_Central"/>
</dbReference>
<dbReference type="GO" id="GO:0008661">
    <property type="term" value="F:1-deoxy-D-xylulose-5-phosphate synthase activity"/>
    <property type="evidence" value="ECO:0000318"/>
    <property type="project" value="GO_Central"/>
</dbReference>
<dbReference type="GO" id="GO:0000287">
    <property type="term" value="F:magnesium ion binding"/>
    <property type="evidence" value="ECO:0007669"/>
    <property type="project" value="UniProtKB-UniRule"/>
</dbReference>
<dbReference type="GO" id="GO:0030976">
    <property type="term" value="F:thiamine pyrophosphate binding"/>
    <property type="evidence" value="ECO:0007669"/>
    <property type="project" value="UniProtKB-UniRule"/>
</dbReference>
<dbReference type="GO" id="GO:0052865">
    <property type="term" value="P:1-deoxy-D-xylulose 5-phosphate biosynthetic process"/>
    <property type="evidence" value="ECO:0007669"/>
    <property type="project" value="UniProtKB-UniPathway"/>
</dbReference>
<dbReference type="GO" id="GO:0019288">
    <property type="term" value="P:isopentenyl diphosphate biosynthetic process, methylerythritol 4-phosphate pathway"/>
    <property type="evidence" value="ECO:0000318"/>
    <property type="project" value="GO_Central"/>
</dbReference>
<dbReference type="GO" id="GO:0016114">
    <property type="term" value="P:terpenoid biosynthetic process"/>
    <property type="evidence" value="ECO:0007669"/>
    <property type="project" value="UniProtKB-UniRule"/>
</dbReference>
<dbReference type="GO" id="GO:0009228">
    <property type="term" value="P:thiamine biosynthetic process"/>
    <property type="evidence" value="ECO:0007669"/>
    <property type="project" value="UniProtKB-UniRule"/>
</dbReference>
<dbReference type="CDD" id="cd02007">
    <property type="entry name" value="TPP_DXS"/>
    <property type="match status" value="1"/>
</dbReference>
<dbReference type="CDD" id="cd07033">
    <property type="entry name" value="TPP_PYR_DXS_TK_like"/>
    <property type="match status" value="1"/>
</dbReference>
<dbReference type="FunFam" id="3.40.50.920:FF:000002">
    <property type="entry name" value="1-deoxy-D-xylulose-5-phosphate synthase"/>
    <property type="match status" value="1"/>
</dbReference>
<dbReference type="FunFam" id="3.40.50.970:FF:000104">
    <property type="entry name" value="1-deoxy-D-xylulose-5-phosphate synthase"/>
    <property type="match status" value="1"/>
</dbReference>
<dbReference type="Gene3D" id="3.40.50.920">
    <property type="match status" value="1"/>
</dbReference>
<dbReference type="Gene3D" id="3.40.50.970">
    <property type="match status" value="2"/>
</dbReference>
<dbReference type="HAMAP" id="MF_00315">
    <property type="entry name" value="DXP_synth"/>
    <property type="match status" value="1"/>
</dbReference>
<dbReference type="InterPro" id="IPR005477">
    <property type="entry name" value="Dxylulose-5-P_synthase"/>
</dbReference>
<dbReference type="InterPro" id="IPR029061">
    <property type="entry name" value="THDP-binding"/>
</dbReference>
<dbReference type="InterPro" id="IPR009014">
    <property type="entry name" value="Transketo_C/PFOR_II"/>
</dbReference>
<dbReference type="InterPro" id="IPR005475">
    <property type="entry name" value="Transketolase-like_Pyr-bd"/>
</dbReference>
<dbReference type="InterPro" id="IPR033248">
    <property type="entry name" value="Transketolase_C"/>
</dbReference>
<dbReference type="InterPro" id="IPR049557">
    <property type="entry name" value="Transketolase_CS"/>
</dbReference>
<dbReference type="NCBIfam" id="TIGR00204">
    <property type="entry name" value="dxs"/>
    <property type="match status" value="1"/>
</dbReference>
<dbReference type="NCBIfam" id="NF003933">
    <property type="entry name" value="PRK05444.2-2"/>
    <property type="match status" value="1"/>
</dbReference>
<dbReference type="PANTHER" id="PTHR43322">
    <property type="entry name" value="1-D-DEOXYXYLULOSE 5-PHOSPHATE SYNTHASE-RELATED"/>
    <property type="match status" value="1"/>
</dbReference>
<dbReference type="PANTHER" id="PTHR43322:SF5">
    <property type="entry name" value="1-DEOXY-D-XYLULOSE-5-PHOSPHATE SYNTHASE, CHLOROPLASTIC"/>
    <property type="match status" value="1"/>
</dbReference>
<dbReference type="Pfam" id="PF13292">
    <property type="entry name" value="DXP_synthase_N"/>
    <property type="match status" value="1"/>
</dbReference>
<dbReference type="Pfam" id="PF02779">
    <property type="entry name" value="Transket_pyr"/>
    <property type="match status" value="1"/>
</dbReference>
<dbReference type="Pfam" id="PF02780">
    <property type="entry name" value="Transketolase_C"/>
    <property type="match status" value="1"/>
</dbReference>
<dbReference type="SMART" id="SM00861">
    <property type="entry name" value="Transket_pyr"/>
    <property type="match status" value="1"/>
</dbReference>
<dbReference type="SUPFAM" id="SSF52518">
    <property type="entry name" value="Thiamin diphosphate-binding fold (THDP-binding)"/>
    <property type="match status" value="2"/>
</dbReference>
<dbReference type="SUPFAM" id="SSF52922">
    <property type="entry name" value="TK C-terminal domain-like"/>
    <property type="match status" value="1"/>
</dbReference>
<dbReference type="PROSITE" id="PS00801">
    <property type="entry name" value="TRANSKETOLASE_1"/>
    <property type="match status" value="1"/>
</dbReference>
<accession>O84335</accession>
<gene>
    <name evidence="1" type="primary">dxs</name>
    <name type="ordered locus">CT_331</name>
</gene>
<sequence>MTYSLLPHIHSPQDLHALSLDKLPVLCDEIRNKIIESLSLTGGHLASNLGGVELTVALHYVFSSPDDQFIFDVGHQSYVHKLLTGRNTEAFSNIRHDNGLSGFTTPQESNHDIFFSGHAGNALSLALGLAKGSSNSSSHILPILGDAAFSCGLTLEALNNIPADLSKFIIVLNDNQMSISENVGNIPQGISHWMYPQKISKLSQKIHSWIQNLPSFLHKKKTLSHKVDIALKSLSHPLFEQFGLHYVGPIDGHNVKKLVQALQMIKDQPQPILFHVCTVKGNGLAEAERDPIRYHGVKAHFQNTSLKKTSGNVELQTPISFPQHAGNILCRLGKKYPQLQVVTPAMSLGSCLEDFRKQFPDRFTDVGIAEGHAVTFSAGIARSGTPVCCSIYSTFLHRAMDNVFHDVCMQELPVIFAIDRAGLAFHDGRSHHGIYDLGFLCSMPNMVICQPRNALVLERLFFSSLLWKSPCAIRYPNIPANEKASNSFFPFSPILPGEAEILCQGDDLLLIALGHMCNTALTVKEHLLDYGISTTVVDPIFIKPLDRKLLQSLLTHHSKVIILEEHSIHGGLGSEFLLFLNQHNIKADVLSLGVPDMFIPHGNPETILNLIGLTSDHITQRILSHFKFSTPIPIERFFKA</sequence>
<feature type="chain" id="PRO_0000189103" description="1-deoxy-D-xylulose-5-phosphate synthase">
    <location>
        <begin position="1"/>
        <end position="640"/>
    </location>
</feature>
<feature type="binding site" evidence="1">
    <location>
        <position position="75"/>
    </location>
    <ligand>
        <name>thiamine diphosphate</name>
        <dbReference type="ChEBI" id="CHEBI:58937"/>
    </ligand>
</feature>
<feature type="binding site" evidence="1">
    <location>
        <begin position="117"/>
        <end position="119"/>
    </location>
    <ligand>
        <name>thiamine diphosphate</name>
        <dbReference type="ChEBI" id="CHEBI:58937"/>
    </ligand>
</feature>
<feature type="binding site" evidence="1">
    <location>
        <position position="146"/>
    </location>
    <ligand>
        <name>Mg(2+)</name>
        <dbReference type="ChEBI" id="CHEBI:18420"/>
    </ligand>
</feature>
<feature type="binding site" evidence="1">
    <location>
        <begin position="147"/>
        <end position="148"/>
    </location>
    <ligand>
        <name>thiamine diphosphate</name>
        <dbReference type="ChEBI" id="CHEBI:58937"/>
    </ligand>
</feature>
<feature type="binding site" evidence="1">
    <location>
        <position position="175"/>
    </location>
    <ligand>
        <name>Mg(2+)</name>
        <dbReference type="ChEBI" id="CHEBI:18420"/>
    </ligand>
</feature>
<feature type="binding site" evidence="1">
    <location>
        <position position="175"/>
    </location>
    <ligand>
        <name>thiamine diphosphate</name>
        <dbReference type="ChEBI" id="CHEBI:58937"/>
    </ligand>
</feature>
<feature type="binding site" evidence="1">
    <location>
        <position position="370"/>
    </location>
    <ligand>
        <name>thiamine diphosphate</name>
        <dbReference type="ChEBI" id="CHEBI:58937"/>
    </ligand>
</feature>